<dbReference type="EMBL" id="AM260525">
    <property type="protein sequence ID" value="CAK01856.1"/>
    <property type="molecule type" value="Genomic_DNA"/>
</dbReference>
<dbReference type="RefSeq" id="WP_012231992.1">
    <property type="nucleotide sequence ID" value="NC_010161.1"/>
</dbReference>
<dbReference type="SMR" id="A9IW17"/>
<dbReference type="KEGG" id="btr:BT_1510"/>
<dbReference type="eggNOG" id="COG0255">
    <property type="taxonomic scope" value="Bacteria"/>
</dbReference>
<dbReference type="HOGENOM" id="CLU_158491_1_0_5"/>
<dbReference type="Proteomes" id="UP000001592">
    <property type="component" value="Chromosome"/>
</dbReference>
<dbReference type="GO" id="GO:0022625">
    <property type="term" value="C:cytosolic large ribosomal subunit"/>
    <property type="evidence" value="ECO:0007669"/>
    <property type="project" value="TreeGrafter"/>
</dbReference>
<dbReference type="GO" id="GO:0003735">
    <property type="term" value="F:structural constituent of ribosome"/>
    <property type="evidence" value="ECO:0007669"/>
    <property type="project" value="InterPro"/>
</dbReference>
<dbReference type="GO" id="GO:0006412">
    <property type="term" value="P:translation"/>
    <property type="evidence" value="ECO:0007669"/>
    <property type="project" value="UniProtKB-UniRule"/>
</dbReference>
<dbReference type="CDD" id="cd00427">
    <property type="entry name" value="Ribosomal_L29_HIP"/>
    <property type="match status" value="1"/>
</dbReference>
<dbReference type="FunFam" id="1.10.287.310:FF:000001">
    <property type="entry name" value="50S ribosomal protein L29"/>
    <property type="match status" value="1"/>
</dbReference>
<dbReference type="Gene3D" id="6.10.140.1970">
    <property type="match status" value="1"/>
</dbReference>
<dbReference type="HAMAP" id="MF_00374">
    <property type="entry name" value="Ribosomal_uL29"/>
    <property type="match status" value="1"/>
</dbReference>
<dbReference type="InterPro" id="IPR050063">
    <property type="entry name" value="Ribosomal_protein_uL29"/>
</dbReference>
<dbReference type="InterPro" id="IPR001854">
    <property type="entry name" value="Ribosomal_uL29"/>
</dbReference>
<dbReference type="InterPro" id="IPR018254">
    <property type="entry name" value="Ribosomal_uL29_CS"/>
</dbReference>
<dbReference type="InterPro" id="IPR036049">
    <property type="entry name" value="Ribosomal_uL29_sf"/>
</dbReference>
<dbReference type="NCBIfam" id="TIGR00012">
    <property type="entry name" value="L29"/>
    <property type="match status" value="1"/>
</dbReference>
<dbReference type="PANTHER" id="PTHR10916">
    <property type="entry name" value="60S RIBOSOMAL PROTEIN L35/50S RIBOSOMAL PROTEIN L29"/>
    <property type="match status" value="1"/>
</dbReference>
<dbReference type="PANTHER" id="PTHR10916:SF0">
    <property type="entry name" value="LARGE RIBOSOMAL SUBUNIT PROTEIN UL29C"/>
    <property type="match status" value="1"/>
</dbReference>
<dbReference type="Pfam" id="PF00831">
    <property type="entry name" value="Ribosomal_L29"/>
    <property type="match status" value="1"/>
</dbReference>
<dbReference type="SUPFAM" id="SSF46561">
    <property type="entry name" value="Ribosomal protein L29 (L29p)"/>
    <property type="match status" value="1"/>
</dbReference>
<dbReference type="PROSITE" id="PS00579">
    <property type="entry name" value="RIBOSOMAL_L29"/>
    <property type="match status" value="1"/>
</dbReference>
<proteinExistence type="inferred from homology"/>
<gene>
    <name evidence="1" type="primary">rpmC</name>
    <name type="ordered locus">BT_1510</name>
</gene>
<reference key="1">
    <citation type="journal article" date="2007" name="Nat. Genet.">
        <title>Genomic analysis of Bartonella identifies type IV secretion systems as host adaptability factors.</title>
        <authorList>
            <person name="Saenz H.L."/>
            <person name="Engel P."/>
            <person name="Stoeckli M.C."/>
            <person name="Lanz C."/>
            <person name="Raddatz G."/>
            <person name="Vayssier-Taussat M."/>
            <person name="Birtles R."/>
            <person name="Schuster S.C."/>
            <person name="Dehio C."/>
        </authorList>
    </citation>
    <scope>NUCLEOTIDE SEQUENCE [LARGE SCALE GENOMIC DNA]</scope>
    <source>
        <strain>CIP 105476 / IBS 506</strain>
    </source>
</reference>
<comment type="similarity">
    <text evidence="1">Belongs to the universal ribosomal protein uL29 family.</text>
</comment>
<feature type="chain" id="PRO_1000079874" description="Large ribosomal subunit protein uL29">
    <location>
        <begin position="1"/>
        <end position="66"/>
    </location>
</feature>
<protein>
    <recommendedName>
        <fullName evidence="1">Large ribosomal subunit protein uL29</fullName>
    </recommendedName>
    <alternativeName>
        <fullName evidence="2">50S ribosomal protein L29</fullName>
    </alternativeName>
</protein>
<sequence>MRARELRAQTLDQMKDELAKLKKEQFNLRFQKATGQLEKTARVRQVRRDIARIKTFLHQKLSESKV</sequence>
<name>RL29_BART1</name>
<accession>A9IW17</accession>
<evidence type="ECO:0000255" key="1">
    <source>
        <dbReference type="HAMAP-Rule" id="MF_00374"/>
    </source>
</evidence>
<evidence type="ECO:0000305" key="2"/>
<keyword id="KW-0687">Ribonucleoprotein</keyword>
<keyword id="KW-0689">Ribosomal protein</keyword>
<organism>
    <name type="scientific">Bartonella tribocorum (strain CIP 105476 / IBS 506)</name>
    <dbReference type="NCBI Taxonomy" id="382640"/>
    <lineage>
        <taxon>Bacteria</taxon>
        <taxon>Pseudomonadati</taxon>
        <taxon>Pseudomonadota</taxon>
        <taxon>Alphaproteobacteria</taxon>
        <taxon>Hyphomicrobiales</taxon>
        <taxon>Bartonellaceae</taxon>
        <taxon>Bartonella</taxon>
    </lineage>
</organism>